<protein>
    <recommendedName>
        <fullName evidence="1">Eukaryotic translation initiation factor 3 subunit A</fullName>
        <shortName evidence="1">eIF3a</shortName>
    </recommendedName>
    <alternativeName>
        <fullName evidence="1">Eukaryotic translation initiation factor 3 110 kDa subunit homolog</fullName>
        <shortName evidence="1">eIF3 p110</shortName>
    </alternativeName>
    <alternativeName>
        <fullName evidence="1">Translation initiation factor eIF3, p110 subunit homolog</fullName>
    </alternativeName>
</protein>
<proteinExistence type="inferred from homology"/>
<reference key="1">
    <citation type="journal article" date="2004" name="Science">
        <title>The Ashbya gossypii genome as a tool for mapping the ancient Saccharomyces cerevisiae genome.</title>
        <authorList>
            <person name="Dietrich F.S."/>
            <person name="Voegeli S."/>
            <person name="Brachat S."/>
            <person name="Lerch A."/>
            <person name="Gates K."/>
            <person name="Steiner S."/>
            <person name="Mohr C."/>
            <person name="Poehlmann R."/>
            <person name="Luedi P."/>
            <person name="Choi S."/>
            <person name="Wing R.A."/>
            <person name="Flavier A."/>
            <person name="Gaffney T.D."/>
            <person name="Philippsen P."/>
        </authorList>
    </citation>
    <scope>NUCLEOTIDE SEQUENCE [LARGE SCALE GENOMIC DNA]</scope>
    <source>
        <strain>ATCC 10895 / CBS 109.51 / FGSC 9923 / NRRL Y-1056</strain>
    </source>
</reference>
<reference key="2">
    <citation type="journal article" date="2013" name="G3 (Bethesda)">
        <title>Genomes of Ashbya fungi isolated from insects reveal four mating-type loci, numerous translocations, lack of transposons, and distinct gene duplications.</title>
        <authorList>
            <person name="Dietrich F.S."/>
            <person name="Voegeli S."/>
            <person name="Kuo S."/>
            <person name="Philippsen P."/>
        </authorList>
    </citation>
    <scope>GENOME REANNOTATION</scope>
    <source>
        <strain>ATCC 10895 / CBS 109.51 / FGSC 9923 / NRRL Y-1056</strain>
    </source>
</reference>
<organism>
    <name type="scientific">Eremothecium gossypii (strain ATCC 10895 / CBS 109.51 / FGSC 9923 / NRRL Y-1056)</name>
    <name type="common">Yeast</name>
    <name type="synonym">Ashbya gossypii</name>
    <dbReference type="NCBI Taxonomy" id="284811"/>
    <lineage>
        <taxon>Eukaryota</taxon>
        <taxon>Fungi</taxon>
        <taxon>Dikarya</taxon>
        <taxon>Ascomycota</taxon>
        <taxon>Saccharomycotina</taxon>
        <taxon>Saccharomycetes</taxon>
        <taxon>Saccharomycetales</taxon>
        <taxon>Saccharomycetaceae</taxon>
        <taxon>Eremothecium</taxon>
    </lineage>
</organism>
<accession>Q75DT8</accession>
<feature type="chain" id="PRO_0000366349" description="Eukaryotic translation initiation factor 3 subunit A">
    <location>
        <begin position="1"/>
        <end position="921"/>
    </location>
</feature>
<feature type="domain" description="PCI" evidence="2">
    <location>
        <begin position="319"/>
        <end position="493"/>
    </location>
</feature>
<feature type="region of interest" description="Disordered" evidence="3">
    <location>
        <begin position="497"/>
        <end position="524"/>
    </location>
</feature>
<feature type="region of interest" description="Disordered" evidence="3">
    <location>
        <begin position="818"/>
        <end position="921"/>
    </location>
</feature>
<feature type="coiled-coil region" evidence="1">
    <location>
        <begin position="562"/>
        <end position="647"/>
    </location>
</feature>
<feature type="coiled-coil region" evidence="1">
    <location>
        <begin position="693"/>
        <end position="868"/>
    </location>
</feature>
<feature type="compositionally biased region" description="Basic and acidic residues" evidence="3">
    <location>
        <begin position="506"/>
        <end position="517"/>
    </location>
</feature>
<feature type="compositionally biased region" description="Basic and acidic residues" evidence="3">
    <location>
        <begin position="818"/>
        <end position="865"/>
    </location>
</feature>
<feature type="compositionally biased region" description="Pro residues" evidence="3">
    <location>
        <begin position="873"/>
        <end position="890"/>
    </location>
</feature>
<feature type="compositionally biased region" description="Basic and acidic residues" evidence="3">
    <location>
        <begin position="903"/>
        <end position="913"/>
    </location>
</feature>
<evidence type="ECO:0000255" key="1">
    <source>
        <dbReference type="HAMAP-Rule" id="MF_03000"/>
    </source>
</evidence>
<evidence type="ECO:0000255" key="2">
    <source>
        <dbReference type="PROSITE-ProRule" id="PRU01185"/>
    </source>
</evidence>
<evidence type="ECO:0000256" key="3">
    <source>
        <dbReference type="SAM" id="MobiDB-lite"/>
    </source>
</evidence>
<name>EIF3A_EREGS</name>
<sequence>MAPPVLRPENALKRADELISVGEPQAALQSLLDYITSRRIRFADPAAIEPIVFKFLELGVELKRGKVIKDGLYQYRKHVQSSTEGLKSVGAVSRRFIDLIEKKMSSEQAKANAEESTEEDLEGGVTPENLLISVYEQDQSVGGFNDEAVTSWLRFTWESYRTVLDLLRNNSQLEITYSGVVNRAMQFCLKYNRKNEFKRLADMLRQHLDAANYQQQKSKQYTVDLSDPDTLQRYLDQRILQVNVSVKLGLWHEAFRSIEDVHHLLSMSTRDPKPSVLANYYQNMAKVFFVSSNYLLNSVALQKFYDLYQQNPKATDEDFKFYASQLVLSALSIQQDDLPVVGYDPLARLAGFLNLESKPTRSQVIEAVSDSKIFSRADEPVKKLYELLNSDFDVNTLKESLASLLPELNSKSYFTQYVEPLKSFTIRKAFISASKQFGSIKLDELFEHTSLPSPFDLSPLDLEKSLLQAAMNDYVSFSIDHDAGVVSFMEDPFELLGGSTATNADDEQRNDDGYEETHVEEEPEPILTRNSAVRTQLIELAKALKETEGFPHASYVDKVRMARNELIRQNNAIIASEKEAAEERARQLEYEKQSASGVPLTAEQVVEERQRRMKEEKEAAEARMEAEARRRAEEKRERELAAINEKTMLKMIEDINAKGLIFIDPKEAKNMTLEKFKKLTVELVSKDKKDLDERMSHAFKRVDHIERAYRKLEAPLWEKDAQKQKERDLESYNKLKQMMVEKAKKDHEENLRIHDRLVKIYPSYLHFREKVIAAQKSQIEALRAENAAKLEAAKNARLQEVRQQRYNELIARRKEELAAKEHDDRQRMLQDRLTKERKERERVNKEKDEAARKQREIEEAVERTIKRNVSATPAPPVRSAPPARAAPPPRASNEQVASPAPQPEKKLTYAEKMKLRRAGRA</sequence>
<gene>
    <name evidence="1" type="primary">TIF32</name>
    <name type="ordered locus">ABL065W</name>
</gene>
<keyword id="KW-0175">Coiled coil</keyword>
<keyword id="KW-0963">Cytoplasm</keyword>
<keyword id="KW-0396">Initiation factor</keyword>
<keyword id="KW-0648">Protein biosynthesis</keyword>
<keyword id="KW-1185">Reference proteome</keyword>
<keyword id="KW-0694">RNA-binding</keyword>
<comment type="function">
    <text evidence="1">RNA-binding component of the eukaryotic translation initiation factor 3 (eIF-3) complex, which is involved in protein synthesis of a specialized repertoire of mRNAs and, together with other initiation factors, stimulates binding of mRNA and methionyl-tRNAi to the 40S ribosome. The eIF-3 complex specifically targets and initiates translation of a subset of mRNAs involved in cell proliferation.</text>
</comment>
<comment type="subunit">
    <text evidence="1">Component of the eukaryotic translation initiation factor 3 (eIF-3) complex.</text>
</comment>
<comment type="subcellular location">
    <subcellularLocation>
        <location evidence="1">Cytoplasm</location>
    </subcellularLocation>
</comment>
<comment type="similarity">
    <text evidence="1">Belongs to the eIF-3 subunit A family.</text>
</comment>
<dbReference type="EMBL" id="AE016815">
    <property type="protein sequence ID" value="AAS50706.1"/>
    <property type="molecule type" value="Genomic_DNA"/>
</dbReference>
<dbReference type="RefSeq" id="NP_982882.1">
    <property type="nucleotide sequence ID" value="NM_208235.2"/>
</dbReference>
<dbReference type="SMR" id="Q75DT8"/>
<dbReference type="FunCoup" id="Q75DT8">
    <property type="interactions" value="1379"/>
</dbReference>
<dbReference type="STRING" id="284811.Q75DT8"/>
<dbReference type="EnsemblFungi" id="AAS50706">
    <property type="protein sequence ID" value="AAS50706"/>
    <property type="gene ID" value="AGOS_ABL065W"/>
</dbReference>
<dbReference type="GeneID" id="4618963"/>
<dbReference type="KEGG" id="ago:AGOS_ABL065W"/>
<dbReference type="eggNOG" id="KOG2072">
    <property type="taxonomic scope" value="Eukaryota"/>
</dbReference>
<dbReference type="HOGENOM" id="CLU_002096_2_1_1"/>
<dbReference type="InParanoid" id="Q75DT8"/>
<dbReference type="OMA" id="EHITNKR"/>
<dbReference type="OrthoDB" id="18884at2759"/>
<dbReference type="Proteomes" id="UP000000591">
    <property type="component" value="Chromosome II"/>
</dbReference>
<dbReference type="GO" id="GO:0010494">
    <property type="term" value="C:cytoplasmic stress granule"/>
    <property type="evidence" value="ECO:0007669"/>
    <property type="project" value="EnsemblFungi"/>
</dbReference>
<dbReference type="GO" id="GO:0016282">
    <property type="term" value="C:eukaryotic 43S preinitiation complex"/>
    <property type="evidence" value="ECO:0007669"/>
    <property type="project" value="UniProtKB-UniRule"/>
</dbReference>
<dbReference type="GO" id="GO:0033290">
    <property type="term" value="C:eukaryotic 48S preinitiation complex"/>
    <property type="evidence" value="ECO:0007669"/>
    <property type="project" value="UniProtKB-UniRule"/>
</dbReference>
<dbReference type="GO" id="GO:0071540">
    <property type="term" value="C:eukaryotic translation initiation factor 3 complex, eIF3e"/>
    <property type="evidence" value="ECO:0000318"/>
    <property type="project" value="GO_Central"/>
</dbReference>
<dbReference type="GO" id="GO:0071541">
    <property type="term" value="C:eukaryotic translation initiation factor 3 complex, eIF3m"/>
    <property type="evidence" value="ECO:0000318"/>
    <property type="project" value="GO_Central"/>
</dbReference>
<dbReference type="GO" id="GO:0000131">
    <property type="term" value="C:incipient cellular bud site"/>
    <property type="evidence" value="ECO:0007669"/>
    <property type="project" value="EnsemblFungi"/>
</dbReference>
<dbReference type="GO" id="GO:0043614">
    <property type="term" value="C:multi-eIF complex"/>
    <property type="evidence" value="ECO:0000318"/>
    <property type="project" value="GO_Central"/>
</dbReference>
<dbReference type="GO" id="GO:0003729">
    <property type="term" value="F:mRNA binding"/>
    <property type="evidence" value="ECO:0000318"/>
    <property type="project" value="GO_Central"/>
</dbReference>
<dbReference type="GO" id="GO:0003743">
    <property type="term" value="F:translation initiation factor activity"/>
    <property type="evidence" value="ECO:0007669"/>
    <property type="project" value="UniProtKB-UniRule"/>
</dbReference>
<dbReference type="GO" id="GO:0001732">
    <property type="term" value="P:formation of cytoplasmic translation initiation complex"/>
    <property type="evidence" value="ECO:0000318"/>
    <property type="project" value="GO_Central"/>
</dbReference>
<dbReference type="GO" id="GO:0002188">
    <property type="term" value="P:translation reinitiation"/>
    <property type="evidence" value="ECO:0000318"/>
    <property type="project" value="GO_Central"/>
</dbReference>
<dbReference type="FunFam" id="4.10.860.10:FF:000001">
    <property type="entry name" value="Eukaryotic translation initiation factor 3 subunit A"/>
    <property type="match status" value="1"/>
</dbReference>
<dbReference type="Gene3D" id="1.25.40.860">
    <property type="match status" value="2"/>
</dbReference>
<dbReference type="Gene3D" id="4.10.860.10">
    <property type="entry name" value="UVR domain"/>
    <property type="match status" value="1"/>
</dbReference>
<dbReference type="HAMAP" id="MF_03000">
    <property type="entry name" value="eIF3a"/>
    <property type="match status" value="1"/>
</dbReference>
<dbReference type="InterPro" id="IPR027512">
    <property type="entry name" value="EIF3A"/>
</dbReference>
<dbReference type="InterPro" id="IPR054711">
    <property type="entry name" value="eIF3a_PCI_TPR-like"/>
</dbReference>
<dbReference type="InterPro" id="IPR000717">
    <property type="entry name" value="PCI_dom"/>
</dbReference>
<dbReference type="PANTHER" id="PTHR14005:SF0">
    <property type="entry name" value="EUKARYOTIC TRANSLATION INITIATION FACTOR 3 SUBUNIT A"/>
    <property type="match status" value="1"/>
</dbReference>
<dbReference type="PANTHER" id="PTHR14005">
    <property type="entry name" value="EUKARYOTIC TRANSLATION INITIATION FACTOR 3, THETA SUBUNIT"/>
    <property type="match status" value="1"/>
</dbReference>
<dbReference type="Pfam" id="PF22591">
    <property type="entry name" value="eIF3a_PCI_TPR-like"/>
    <property type="match status" value="1"/>
</dbReference>
<dbReference type="PROSITE" id="PS50250">
    <property type="entry name" value="PCI"/>
    <property type="match status" value="1"/>
</dbReference>